<dbReference type="EC" id="2.3.1.286" evidence="3"/>
<dbReference type="EMBL" id="CP017630">
    <property type="protein sequence ID" value="AOW30939.1"/>
    <property type="molecule type" value="Genomic_DNA"/>
</dbReference>
<dbReference type="RefSeq" id="XP_718246.2">
    <property type="nucleotide sequence ID" value="XM_713153.2"/>
</dbReference>
<dbReference type="SMR" id="Q5A985"/>
<dbReference type="FunCoup" id="Q5A985">
    <property type="interactions" value="480"/>
</dbReference>
<dbReference type="STRING" id="237561.Q5A985"/>
<dbReference type="EnsemblFungi" id="CR_01800C_A-T">
    <property type="protein sequence ID" value="CR_01800C_A-T-p1"/>
    <property type="gene ID" value="CR_01800C_A"/>
</dbReference>
<dbReference type="GeneID" id="3640162"/>
<dbReference type="KEGG" id="cal:CAALFM_CR01800CA"/>
<dbReference type="CGD" id="CAL0000178194">
    <property type="gene designation" value="HST2"/>
</dbReference>
<dbReference type="VEuPathDB" id="FungiDB:CR_01800C_A"/>
<dbReference type="eggNOG" id="KOG2682">
    <property type="taxonomic scope" value="Eukaryota"/>
</dbReference>
<dbReference type="HOGENOM" id="CLU_023643_7_2_1"/>
<dbReference type="InParanoid" id="Q5A985"/>
<dbReference type="OrthoDB" id="420264at2759"/>
<dbReference type="PRO" id="PR:Q5A985"/>
<dbReference type="Proteomes" id="UP000000559">
    <property type="component" value="Chromosome R"/>
</dbReference>
<dbReference type="GO" id="GO:0099115">
    <property type="term" value="C:chromosome, subtelomeric region"/>
    <property type="evidence" value="ECO:0007669"/>
    <property type="project" value="EnsemblFungi"/>
</dbReference>
<dbReference type="GO" id="GO:0005737">
    <property type="term" value="C:cytoplasm"/>
    <property type="evidence" value="ECO:0000314"/>
    <property type="project" value="CGD"/>
</dbReference>
<dbReference type="GO" id="GO:0031934">
    <property type="term" value="C:mating-type region heterochromatin"/>
    <property type="evidence" value="ECO:0007669"/>
    <property type="project" value="EnsemblFungi"/>
</dbReference>
<dbReference type="GO" id="GO:0005634">
    <property type="term" value="C:nucleus"/>
    <property type="evidence" value="ECO:0000318"/>
    <property type="project" value="GO_Central"/>
</dbReference>
<dbReference type="GO" id="GO:0005721">
    <property type="term" value="C:pericentric heterochromatin"/>
    <property type="evidence" value="ECO:0007669"/>
    <property type="project" value="EnsemblFungi"/>
</dbReference>
<dbReference type="GO" id="GO:0033553">
    <property type="term" value="C:rDNA heterochromatin"/>
    <property type="evidence" value="ECO:0007669"/>
    <property type="project" value="EnsemblFungi"/>
</dbReference>
<dbReference type="GO" id="GO:0017136">
    <property type="term" value="F:histone deacetylase activity, NAD-dependent"/>
    <property type="evidence" value="ECO:0000318"/>
    <property type="project" value="GO_Central"/>
</dbReference>
<dbReference type="GO" id="GO:0046872">
    <property type="term" value="F:metal ion binding"/>
    <property type="evidence" value="ECO:0007669"/>
    <property type="project" value="UniProtKB-KW"/>
</dbReference>
<dbReference type="GO" id="GO:0070403">
    <property type="term" value="F:NAD+ binding"/>
    <property type="evidence" value="ECO:0000318"/>
    <property type="project" value="GO_Central"/>
</dbReference>
<dbReference type="GO" id="GO:0031508">
    <property type="term" value="P:pericentric heterochromatin formation"/>
    <property type="evidence" value="ECO:0007669"/>
    <property type="project" value="EnsemblFungi"/>
</dbReference>
<dbReference type="GO" id="GO:0036166">
    <property type="term" value="P:phenotypic switching"/>
    <property type="evidence" value="ECO:0000315"/>
    <property type="project" value="CGD"/>
</dbReference>
<dbReference type="GO" id="GO:0000183">
    <property type="term" value="P:rDNA heterochromatin formation"/>
    <property type="evidence" value="ECO:0000318"/>
    <property type="project" value="GO_Central"/>
</dbReference>
<dbReference type="Gene3D" id="3.30.1600.10">
    <property type="entry name" value="SIR2/SIRT2 'Small Domain"/>
    <property type="match status" value="1"/>
</dbReference>
<dbReference type="Gene3D" id="3.40.50.1220">
    <property type="entry name" value="TPP-binding domain"/>
    <property type="match status" value="1"/>
</dbReference>
<dbReference type="InterPro" id="IPR029035">
    <property type="entry name" value="DHS-like_NAD/FAD-binding_dom"/>
</dbReference>
<dbReference type="InterPro" id="IPR050134">
    <property type="entry name" value="NAD-dep_sirtuin_deacylases"/>
</dbReference>
<dbReference type="InterPro" id="IPR003000">
    <property type="entry name" value="Sirtuin"/>
</dbReference>
<dbReference type="InterPro" id="IPR026591">
    <property type="entry name" value="Sirtuin_cat_small_dom_sf"/>
</dbReference>
<dbReference type="InterPro" id="IPR017328">
    <property type="entry name" value="Sirtuin_class_I"/>
</dbReference>
<dbReference type="InterPro" id="IPR026590">
    <property type="entry name" value="Ssirtuin_cat_dom"/>
</dbReference>
<dbReference type="PANTHER" id="PTHR11085:SF6">
    <property type="entry name" value="NAD-DEPENDENT PROTEIN DEACETYLASE SIRTUIN-2"/>
    <property type="match status" value="1"/>
</dbReference>
<dbReference type="PANTHER" id="PTHR11085">
    <property type="entry name" value="NAD-DEPENDENT PROTEIN DEACYLASE SIRTUIN-5, MITOCHONDRIAL-RELATED"/>
    <property type="match status" value="1"/>
</dbReference>
<dbReference type="Pfam" id="PF02146">
    <property type="entry name" value="SIR2"/>
    <property type="match status" value="1"/>
</dbReference>
<dbReference type="PIRSF" id="PIRSF037938">
    <property type="entry name" value="SIR2_euk"/>
    <property type="match status" value="1"/>
</dbReference>
<dbReference type="SUPFAM" id="SSF52467">
    <property type="entry name" value="DHS-like NAD/FAD-binding domain"/>
    <property type="match status" value="1"/>
</dbReference>
<dbReference type="PROSITE" id="PS50305">
    <property type="entry name" value="SIRTUIN"/>
    <property type="match status" value="1"/>
</dbReference>
<comment type="function">
    <text evidence="1">NAD-dependent histone deacetylase that is involved in nuclear silencing events. Derepresses subtelomeric silencing and increases repression in nucleolar (rDNA) silencing. Its function is negatively regulated by active nuclear export (By similarity).</text>
</comment>
<comment type="catalytic activity">
    <reaction evidence="3">
        <text>N(6)-acetyl-L-lysyl-[protein] + NAD(+) + H2O = 2''-O-acetyl-ADP-D-ribose + nicotinamide + L-lysyl-[protein]</text>
        <dbReference type="Rhea" id="RHEA:43636"/>
        <dbReference type="Rhea" id="RHEA-COMP:9752"/>
        <dbReference type="Rhea" id="RHEA-COMP:10731"/>
        <dbReference type="ChEBI" id="CHEBI:15377"/>
        <dbReference type="ChEBI" id="CHEBI:17154"/>
        <dbReference type="ChEBI" id="CHEBI:29969"/>
        <dbReference type="ChEBI" id="CHEBI:57540"/>
        <dbReference type="ChEBI" id="CHEBI:61930"/>
        <dbReference type="ChEBI" id="CHEBI:83767"/>
        <dbReference type="EC" id="2.3.1.286"/>
    </reaction>
</comment>
<comment type="cofactor">
    <cofactor evidence="1">
        <name>Zn(2+)</name>
        <dbReference type="ChEBI" id="CHEBI:29105"/>
    </cofactor>
    <text evidence="1">Binds 1 zinc ion per subunit.</text>
</comment>
<comment type="subcellular location">
    <subcellularLocation>
        <location evidence="1">Cytoplasm</location>
    </subcellularLocation>
    <subcellularLocation>
        <location evidence="1">Nucleus</location>
    </subcellularLocation>
</comment>
<comment type="similarity">
    <text evidence="5">Belongs to the sirtuin family. Class I subfamily.</text>
</comment>
<evidence type="ECO:0000250" key="1"/>
<evidence type="ECO:0000255" key="2"/>
<evidence type="ECO:0000255" key="3">
    <source>
        <dbReference type="PROSITE-ProRule" id="PRU00236"/>
    </source>
</evidence>
<evidence type="ECO:0000256" key="4">
    <source>
        <dbReference type="SAM" id="MobiDB-lite"/>
    </source>
</evidence>
<evidence type="ECO:0000305" key="5"/>
<name>HST2_CANAL</name>
<sequence>MPSLDDILKPVAEAVKNGKKVTFFNGAGISTGAGIPDFRSPDTGLYANLAKLNLPFAEAVFDIDFFKEDPKPFYTLAEELYPGNFAPTKFHHFIKLLQDQGSLKRVYTQNIDTLERLAGVEDKYIVEAHGSFASNHCVDCHKEMTTETLKTYMKDKKIPSCQHCEGYVKPDIVFFGEGLPVKFFDLWEDDCEDVEVAIVAGTSLTVFPFASLPGEVNKKCLRVLVNKEKVGTFKHEPRKSDIIALHDCDIVAEKLCTLLGLDDKLNEVYEKEKIKYSKAETKETKMHEIEDKLKEEAHLKEDKHTTKVDKKEKQNDANDKELEQLIDKLKI</sequence>
<accession>Q5A985</accession>
<accession>A0A1D8PS26</accession>
<feature type="chain" id="PRO_0000417412" description="NAD-dependent protein deacetylase HST2">
    <location>
        <begin position="1"/>
        <end position="331"/>
    </location>
</feature>
<feature type="domain" description="Deacetylase sirtuin-type" evidence="3">
    <location>
        <begin position="1"/>
        <end position="262"/>
    </location>
</feature>
<feature type="region of interest" description="Disordered" evidence="4">
    <location>
        <begin position="283"/>
        <end position="319"/>
    </location>
</feature>
<feature type="coiled-coil region" evidence="2">
    <location>
        <begin position="276"/>
        <end position="331"/>
    </location>
</feature>
<feature type="active site" description="Proton acceptor" evidence="3">
    <location>
        <position position="129"/>
    </location>
</feature>
<feature type="binding site" evidence="1">
    <location>
        <begin position="26"/>
        <end position="46"/>
    </location>
    <ligand>
        <name>NAD(+)</name>
        <dbReference type="ChEBI" id="CHEBI:57540"/>
    </ligand>
</feature>
<feature type="binding site" evidence="1">
    <location>
        <begin position="109"/>
        <end position="112"/>
    </location>
    <ligand>
        <name>NAD(+)</name>
        <dbReference type="ChEBI" id="CHEBI:57540"/>
    </ligand>
</feature>
<feature type="binding site" evidence="3">
    <location>
        <position position="137"/>
    </location>
    <ligand>
        <name>Zn(2+)</name>
        <dbReference type="ChEBI" id="CHEBI:29105"/>
    </ligand>
</feature>
<feature type="binding site" evidence="3">
    <location>
        <position position="140"/>
    </location>
    <ligand>
        <name>Zn(2+)</name>
        <dbReference type="ChEBI" id="CHEBI:29105"/>
    </ligand>
</feature>
<feature type="binding site" evidence="3">
    <location>
        <position position="161"/>
    </location>
    <ligand>
        <name>Zn(2+)</name>
        <dbReference type="ChEBI" id="CHEBI:29105"/>
    </ligand>
</feature>
<feature type="binding site" evidence="3">
    <location>
        <position position="164"/>
    </location>
    <ligand>
        <name>Zn(2+)</name>
        <dbReference type="ChEBI" id="CHEBI:29105"/>
    </ligand>
</feature>
<feature type="binding site" evidence="1">
    <location>
        <begin position="201"/>
        <end position="203"/>
    </location>
    <ligand>
        <name>NAD(+)</name>
        <dbReference type="ChEBI" id="CHEBI:57540"/>
    </ligand>
</feature>
<feature type="binding site" evidence="1">
    <location>
        <begin position="226"/>
        <end position="228"/>
    </location>
    <ligand>
        <name>NAD(+)</name>
        <dbReference type="ChEBI" id="CHEBI:57540"/>
    </ligand>
</feature>
<feature type="binding site" evidence="1">
    <location>
        <position position="248"/>
    </location>
    <ligand>
        <name>NAD(+)</name>
        <dbReference type="ChEBI" id="CHEBI:57540"/>
    </ligand>
</feature>
<protein>
    <recommendedName>
        <fullName>NAD-dependent protein deacetylase HST2</fullName>
        <ecNumber evidence="3">2.3.1.286</ecNumber>
    </recommendedName>
    <alternativeName>
        <fullName>Homologous to SIR2 protein 2</fullName>
    </alternativeName>
    <alternativeName>
        <fullName>Regulatory protein SIR2 homolog 2</fullName>
    </alternativeName>
</protein>
<proteinExistence type="inferred from homology"/>
<organism>
    <name type="scientific">Candida albicans (strain SC5314 / ATCC MYA-2876)</name>
    <name type="common">Yeast</name>
    <dbReference type="NCBI Taxonomy" id="237561"/>
    <lineage>
        <taxon>Eukaryota</taxon>
        <taxon>Fungi</taxon>
        <taxon>Dikarya</taxon>
        <taxon>Ascomycota</taxon>
        <taxon>Saccharomycotina</taxon>
        <taxon>Pichiomycetes</taxon>
        <taxon>Debaryomycetaceae</taxon>
        <taxon>Candida/Lodderomyces clade</taxon>
        <taxon>Candida</taxon>
    </lineage>
</organism>
<reference key="1">
    <citation type="journal article" date="2004" name="Proc. Natl. Acad. Sci. U.S.A.">
        <title>The diploid genome sequence of Candida albicans.</title>
        <authorList>
            <person name="Jones T."/>
            <person name="Federspiel N.A."/>
            <person name="Chibana H."/>
            <person name="Dungan J."/>
            <person name="Kalman S."/>
            <person name="Magee B.B."/>
            <person name="Newport G."/>
            <person name="Thorstenson Y.R."/>
            <person name="Agabian N."/>
            <person name="Magee P.T."/>
            <person name="Davis R.W."/>
            <person name="Scherer S."/>
        </authorList>
    </citation>
    <scope>NUCLEOTIDE SEQUENCE [LARGE SCALE GENOMIC DNA]</scope>
    <source>
        <strain>SC5314 / ATCC MYA-2876</strain>
    </source>
</reference>
<reference key="2">
    <citation type="journal article" date="2007" name="Genome Biol.">
        <title>Assembly of the Candida albicans genome into sixteen supercontigs aligned on the eight chromosomes.</title>
        <authorList>
            <person name="van het Hoog M."/>
            <person name="Rast T.J."/>
            <person name="Martchenko M."/>
            <person name="Grindle S."/>
            <person name="Dignard D."/>
            <person name="Hogues H."/>
            <person name="Cuomo C."/>
            <person name="Berriman M."/>
            <person name="Scherer S."/>
            <person name="Magee B.B."/>
            <person name="Whiteway M."/>
            <person name="Chibana H."/>
            <person name="Nantel A."/>
            <person name="Magee P.T."/>
        </authorList>
    </citation>
    <scope>GENOME REANNOTATION</scope>
    <source>
        <strain>SC5314 / ATCC MYA-2876</strain>
    </source>
</reference>
<reference key="3">
    <citation type="journal article" date="2013" name="Genome Biol.">
        <title>Assembly of a phased diploid Candida albicans genome facilitates allele-specific measurements and provides a simple model for repeat and indel structure.</title>
        <authorList>
            <person name="Muzzey D."/>
            <person name="Schwartz K."/>
            <person name="Weissman J.S."/>
            <person name="Sherlock G."/>
        </authorList>
    </citation>
    <scope>NUCLEOTIDE SEQUENCE [LARGE SCALE GENOMIC DNA]</scope>
    <scope>GENOME REANNOTATION</scope>
    <source>
        <strain>SC5314 / ATCC MYA-2876</strain>
    </source>
</reference>
<keyword id="KW-0175">Coiled coil</keyword>
<keyword id="KW-0963">Cytoplasm</keyword>
<keyword id="KW-0479">Metal-binding</keyword>
<keyword id="KW-0520">NAD</keyword>
<keyword id="KW-0539">Nucleus</keyword>
<keyword id="KW-1185">Reference proteome</keyword>
<keyword id="KW-0678">Repressor</keyword>
<keyword id="KW-0804">Transcription</keyword>
<keyword id="KW-0805">Transcription regulation</keyword>
<keyword id="KW-0808">Transferase</keyword>
<keyword id="KW-0862">Zinc</keyword>
<gene>
    <name type="primary">HST2</name>
    <name type="ordered locus">CAALFM_CR01800CA</name>
    <name type="ORF">CaO19.10112</name>
    <name type="ORF">CaO19.2580</name>
</gene>